<proteinExistence type="evidence at protein level"/>
<comment type="function">
    <text evidence="5">Myosin regulatory subunit that plays a role to maintain muscle integrity during early development (PubMed:32707087). Plays a role in muscle contraction (PubMed:32707087).</text>
</comment>
<comment type="subunit">
    <text evidence="4 7">Myosin is a hexamer of 2 heavy chains and 4 light chains. Interacts with nanos3; the interaction negatively regulates mylpfa phosphorylation (PubMed:20673786).</text>
</comment>
<comment type="developmental stage">
    <text evidence="3">Expressed in both embryos and adult fish, and the expression is specifically in fast skeletal muscle.</text>
</comment>
<comment type="disruption phenotype">
    <text evidence="5">Reduced trunk contractile force and complete pectoral fin paralysis. Muscle weakness is most pronounced in an appendicular muscle and is explained by reduced myosin activity and fiber degeneration.</text>
</comment>
<accession>O93409</accession>
<gene>
    <name type="primary">mylpfa</name>
    <name evidence="6" type="synonym">mlc2f</name>
    <name type="synonym">myl11a</name>
    <name evidence="6" type="synonym">mylz2</name>
</gene>
<evidence type="ECO:0000255" key="1">
    <source>
        <dbReference type="PROSITE-ProRule" id="PRU00448"/>
    </source>
</evidence>
<evidence type="ECO:0000255" key="2">
    <source>
        <dbReference type="PROSITE-ProRule" id="PRU10142"/>
    </source>
</evidence>
<evidence type="ECO:0000269" key="3">
    <source>
    </source>
</evidence>
<evidence type="ECO:0000269" key="4">
    <source>
    </source>
</evidence>
<evidence type="ECO:0000269" key="5">
    <source>
    </source>
</evidence>
<evidence type="ECO:0000303" key="6">
    <source>
    </source>
</evidence>
<evidence type="ECO:0000305" key="7"/>
<name>MLRSA_DANRE</name>
<dbReference type="EMBL" id="AF081462">
    <property type="protein sequence ID" value="AAC32193.1"/>
    <property type="molecule type" value="mRNA"/>
</dbReference>
<dbReference type="EMBL" id="BX571714">
    <property type="status" value="NOT_ANNOTATED_CDS"/>
    <property type="molecule type" value="Genomic_DNA"/>
</dbReference>
<dbReference type="EMBL" id="BC045520">
    <property type="protein sequence ID" value="AAH45520.1"/>
    <property type="molecule type" value="mRNA"/>
</dbReference>
<dbReference type="EMBL" id="BC163956">
    <property type="protein sequence ID" value="AAI63956.1"/>
    <property type="molecule type" value="mRNA"/>
</dbReference>
<dbReference type="RefSeq" id="NP_571263.1">
    <property type="nucleotide sequence ID" value="NM_131188.2"/>
</dbReference>
<dbReference type="SMR" id="O93409"/>
<dbReference type="FunCoup" id="O93409">
    <property type="interactions" value="1095"/>
</dbReference>
<dbReference type="STRING" id="7955.ENSDARP00000069948"/>
<dbReference type="iPTMnet" id="O93409"/>
<dbReference type="PaxDb" id="7955-ENSDARP00000069948"/>
<dbReference type="Ensembl" id="ENSDART00000075465">
    <property type="protein sequence ID" value="ENSDARP00000069948"/>
    <property type="gene ID" value="ENSDARG00000053254"/>
</dbReference>
<dbReference type="GeneID" id="30429"/>
<dbReference type="KEGG" id="dre:30429"/>
<dbReference type="AGR" id="ZFIN:ZDB-GENE-990712-15"/>
<dbReference type="CTD" id="30429"/>
<dbReference type="ZFIN" id="ZDB-GENE-990712-15">
    <property type="gene designation" value="mylpfa"/>
</dbReference>
<dbReference type="eggNOG" id="KOG0031">
    <property type="taxonomic scope" value="Eukaryota"/>
</dbReference>
<dbReference type="HOGENOM" id="CLU_061288_9_0_1"/>
<dbReference type="InParanoid" id="O93409"/>
<dbReference type="OMA" id="KDLYAMM"/>
<dbReference type="OrthoDB" id="429467at2759"/>
<dbReference type="PhylomeDB" id="O93409"/>
<dbReference type="TreeFam" id="TF314218"/>
<dbReference type="PRO" id="PR:O93409"/>
<dbReference type="Proteomes" id="UP000000437">
    <property type="component" value="Alternate scaffold 3"/>
</dbReference>
<dbReference type="Proteomes" id="UP000000437">
    <property type="component" value="Chromosome 3"/>
</dbReference>
<dbReference type="Bgee" id="ENSDARG00000053254">
    <property type="expression patterns" value="Expressed in bone element and 19 other cell types or tissues"/>
</dbReference>
<dbReference type="ExpressionAtlas" id="O93409">
    <property type="expression patterns" value="baseline and differential"/>
</dbReference>
<dbReference type="GO" id="GO:0005737">
    <property type="term" value="C:cytoplasm"/>
    <property type="evidence" value="ECO:0000318"/>
    <property type="project" value="GO_Central"/>
</dbReference>
<dbReference type="GO" id="GO:0016459">
    <property type="term" value="C:myosin complex"/>
    <property type="evidence" value="ECO:0007669"/>
    <property type="project" value="UniProtKB-KW"/>
</dbReference>
<dbReference type="GO" id="GO:0005509">
    <property type="term" value="F:calcium ion binding"/>
    <property type="evidence" value="ECO:0000318"/>
    <property type="project" value="GO_Central"/>
</dbReference>
<dbReference type="GO" id="GO:0033275">
    <property type="term" value="P:actin-myosin filament sliding"/>
    <property type="evidence" value="ECO:0000315"/>
    <property type="project" value="UniProtKB"/>
</dbReference>
<dbReference type="GO" id="GO:0006936">
    <property type="term" value="P:muscle contraction"/>
    <property type="evidence" value="ECO:0000250"/>
    <property type="project" value="UniProtKB"/>
</dbReference>
<dbReference type="GO" id="GO:0060415">
    <property type="term" value="P:muscle tissue morphogenesis"/>
    <property type="evidence" value="ECO:0000315"/>
    <property type="project" value="UniProtKB"/>
</dbReference>
<dbReference type="GO" id="GO:0007519">
    <property type="term" value="P:skeletal muscle tissue development"/>
    <property type="evidence" value="ECO:0000315"/>
    <property type="project" value="ZFIN"/>
</dbReference>
<dbReference type="CDD" id="cd00051">
    <property type="entry name" value="EFh"/>
    <property type="match status" value="1"/>
</dbReference>
<dbReference type="FunFam" id="1.10.238.10:FF:000010">
    <property type="entry name" value="Myosin regulatory light chain 2, atrial isoform"/>
    <property type="match status" value="1"/>
</dbReference>
<dbReference type="FunFam" id="1.10.238.10:FF:000007">
    <property type="entry name" value="Putative myosin regulatory light chain sqh"/>
    <property type="match status" value="1"/>
</dbReference>
<dbReference type="Gene3D" id="1.10.238.10">
    <property type="entry name" value="EF-hand"/>
    <property type="match status" value="2"/>
</dbReference>
<dbReference type="InterPro" id="IPR011992">
    <property type="entry name" value="EF-hand-dom_pair"/>
</dbReference>
<dbReference type="InterPro" id="IPR018247">
    <property type="entry name" value="EF_Hand_1_Ca_BS"/>
</dbReference>
<dbReference type="InterPro" id="IPR002048">
    <property type="entry name" value="EF_hand_dom"/>
</dbReference>
<dbReference type="InterPro" id="IPR050403">
    <property type="entry name" value="Myosin_RLC"/>
</dbReference>
<dbReference type="PANTHER" id="PTHR23049">
    <property type="entry name" value="MYOSIN REGULATORY LIGHT CHAIN 2"/>
    <property type="match status" value="1"/>
</dbReference>
<dbReference type="Pfam" id="PF13405">
    <property type="entry name" value="EF-hand_6"/>
    <property type="match status" value="1"/>
</dbReference>
<dbReference type="SMART" id="SM00054">
    <property type="entry name" value="EFh"/>
    <property type="match status" value="2"/>
</dbReference>
<dbReference type="SUPFAM" id="SSF47473">
    <property type="entry name" value="EF-hand"/>
    <property type="match status" value="1"/>
</dbReference>
<dbReference type="PROSITE" id="PS00018">
    <property type="entry name" value="EF_HAND_1"/>
    <property type="match status" value="1"/>
</dbReference>
<dbReference type="PROSITE" id="PS50222">
    <property type="entry name" value="EF_HAND_2"/>
    <property type="match status" value="3"/>
</dbReference>
<keyword id="KW-0106">Calcium</keyword>
<keyword id="KW-0479">Metal-binding</keyword>
<keyword id="KW-0505">Motor protein</keyword>
<keyword id="KW-0514">Muscle protein</keyword>
<keyword id="KW-0518">Myosin</keyword>
<keyword id="KW-0597">Phosphoprotein</keyword>
<keyword id="KW-1185">Reference proteome</keyword>
<keyword id="KW-0677">Repeat</keyword>
<feature type="chain" id="PRO_0000453722" description="Myosin regulatory light chain 2, skeletal muscle isoform A">
    <location>
        <begin position="1"/>
        <end position="169"/>
    </location>
</feature>
<feature type="domain" description="EF-hand 1" evidence="1">
    <location>
        <begin position="26"/>
        <end position="61"/>
    </location>
</feature>
<feature type="domain" description="EF-hand 2" evidence="1">
    <location>
        <begin position="96"/>
        <end position="131"/>
    </location>
</feature>
<feature type="domain" description="EF-hand 3" evidence="1">
    <location>
        <begin position="132"/>
        <end position="167"/>
    </location>
</feature>
<feature type="binding site" evidence="2">
    <location>
        <position position="39"/>
    </location>
    <ligand>
        <name>Ca(2+)</name>
        <dbReference type="ChEBI" id="CHEBI:29108"/>
    </ligand>
</feature>
<feature type="binding site" evidence="2">
    <location>
        <position position="41"/>
    </location>
    <ligand>
        <name>Ca(2+)</name>
        <dbReference type="ChEBI" id="CHEBI:29108"/>
    </ligand>
</feature>
<feature type="binding site" evidence="2">
    <location>
        <position position="43"/>
    </location>
    <ligand>
        <name>Ca(2+)</name>
        <dbReference type="ChEBI" id="CHEBI:29108"/>
    </ligand>
</feature>
<feature type="binding site" evidence="2">
    <location>
        <position position="50"/>
    </location>
    <ligand>
        <name>Ca(2+)</name>
        <dbReference type="ChEBI" id="CHEBI:29108"/>
    </ligand>
</feature>
<feature type="modified residue" description="Phosphoserine" evidence="4">
    <location>
        <position position="21"/>
    </location>
</feature>
<organism>
    <name type="scientific">Danio rerio</name>
    <name type="common">Zebrafish</name>
    <name type="synonym">Brachydanio rerio</name>
    <dbReference type="NCBI Taxonomy" id="7955"/>
    <lineage>
        <taxon>Eukaryota</taxon>
        <taxon>Metazoa</taxon>
        <taxon>Chordata</taxon>
        <taxon>Craniata</taxon>
        <taxon>Vertebrata</taxon>
        <taxon>Euteleostomi</taxon>
        <taxon>Actinopterygii</taxon>
        <taxon>Neopterygii</taxon>
        <taxon>Teleostei</taxon>
        <taxon>Ostariophysi</taxon>
        <taxon>Cypriniformes</taxon>
        <taxon>Danionidae</taxon>
        <taxon>Danioninae</taxon>
        <taxon>Danio</taxon>
    </lineage>
</organism>
<reference key="1">
    <citation type="journal article" date="1999" name="DNA Cell Biol.">
        <title>Fast skeletal muscle-specific expression of a zebrafish myosin light chain 2 gene and characterization of its promoter by direct injection into skeletal muscle.</title>
        <authorList>
            <person name="Xu Y."/>
            <person name="He J."/>
            <person name="Tian H.L."/>
            <person name="Chan C.H."/>
            <person name="Liao J."/>
            <person name="Yan T."/>
            <person name="Lam T.J."/>
            <person name="Gong Z."/>
        </authorList>
    </citation>
    <scope>NUCLEOTIDE SEQUENCE [MRNA]</scope>
    <scope>DEVELOPMENTAL STAGE</scope>
    <source>
        <tissue>Skeletal muscle</tissue>
    </source>
</reference>
<reference key="2">
    <citation type="journal article" date="2013" name="Nature">
        <title>The zebrafish reference genome sequence and its relationship to the human genome.</title>
        <authorList>
            <person name="Howe K."/>
            <person name="Clark M.D."/>
            <person name="Torroja C.F."/>
            <person name="Torrance J."/>
            <person name="Berthelot C."/>
            <person name="Muffato M."/>
            <person name="Collins J.E."/>
            <person name="Humphray S."/>
            <person name="McLaren K."/>
            <person name="Matthews L."/>
            <person name="McLaren S."/>
            <person name="Sealy I."/>
            <person name="Caccamo M."/>
            <person name="Churcher C."/>
            <person name="Scott C."/>
            <person name="Barrett J.C."/>
            <person name="Koch R."/>
            <person name="Rauch G.J."/>
            <person name="White S."/>
            <person name="Chow W."/>
            <person name="Kilian B."/>
            <person name="Quintais L.T."/>
            <person name="Guerra-Assuncao J.A."/>
            <person name="Zhou Y."/>
            <person name="Gu Y."/>
            <person name="Yen J."/>
            <person name="Vogel J.H."/>
            <person name="Eyre T."/>
            <person name="Redmond S."/>
            <person name="Banerjee R."/>
            <person name="Chi J."/>
            <person name="Fu B."/>
            <person name="Langley E."/>
            <person name="Maguire S.F."/>
            <person name="Laird G.K."/>
            <person name="Lloyd D."/>
            <person name="Kenyon E."/>
            <person name="Donaldson S."/>
            <person name="Sehra H."/>
            <person name="Almeida-King J."/>
            <person name="Loveland J."/>
            <person name="Trevanion S."/>
            <person name="Jones M."/>
            <person name="Quail M."/>
            <person name="Willey D."/>
            <person name="Hunt A."/>
            <person name="Burton J."/>
            <person name="Sims S."/>
            <person name="McLay K."/>
            <person name="Plumb B."/>
            <person name="Davis J."/>
            <person name="Clee C."/>
            <person name="Oliver K."/>
            <person name="Clark R."/>
            <person name="Riddle C."/>
            <person name="Elliot D."/>
            <person name="Threadgold G."/>
            <person name="Harden G."/>
            <person name="Ware D."/>
            <person name="Begum S."/>
            <person name="Mortimore B."/>
            <person name="Kerry G."/>
            <person name="Heath P."/>
            <person name="Phillimore B."/>
            <person name="Tracey A."/>
            <person name="Corby N."/>
            <person name="Dunn M."/>
            <person name="Johnson C."/>
            <person name="Wood J."/>
            <person name="Clark S."/>
            <person name="Pelan S."/>
            <person name="Griffiths G."/>
            <person name="Smith M."/>
            <person name="Glithero R."/>
            <person name="Howden P."/>
            <person name="Barker N."/>
            <person name="Lloyd C."/>
            <person name="Stevens C."/>
            <person name="Harley J."/>
            <person name="Holt K."/>
            <person name="Panagiotidis G."/>
            <person name="Lovell J."/>
            <person name="Beasley H."/>
            <person name="Henderson C."/>
            <person name="Gordon D."/>
            <person name="Auger K."/>
            <person name="Wright D."/>
            <person name="Collins J."/>
            <person name="Raisen C."/>
            <person name="Dyer L."/>
            <person name="Leung K."/>
            <person name="Robertson L."/>
            <person name="Ambridge K."/>
            <person name="Leongamornlert D."/>
            <person name="McGuire S."/>
            <person name="Gilderthorp R."/>
            <person name="Griffiths C."/>
            <person name="Manthravadi D."/>
            <person name="Nichol S."/>
            <person name="Barker G."/>
            <person name="Whitehead S."/>
            <person name="Kay M."/>
            <person name="Brown J."/>
            <person name="Murnane C."/>
            <person name="Gray E."/>
            <person name="Humphries M."/>
            <person name="Sycamore N."/>
            <person name="Barker D."/>
            <person name="Saunders D."/>
            <person name="Wallis J."/>
            <person name="Babbage A."/>
            <person name="Hammond S."/>
            <person name="Mashreghi-Mohammadi M."/>
            <person name="Barr L."/>
            <person name="Martin S."/>
            <person name="Wray P."/>
            <person name="Ellington A."/>
            <person name="Matthews N."/>
            <person name="Ellwood M."/>
            <person name="Woodmansey R."/>
            <person name="Clark G."/>
            <person name="Cooper J."/>
            <person name="Tromans A."/>
            <person name="Grafham D."/>
            <person name="Skuce C."/>
            <person name="Pandian R."/>
            <person name="Andrews R."/>
            <person name="Harrison E."/>
            <person name="Kimberley A."/>
            <person name="Garnett J."/>
            <person name="Fosker N."/>
            <person name="Hall R."/>
            <person name="Garner P."/>
            <person name="Kelly D."/>
            <person name="Bird C."/>
            <person name="Palmer S."/>
            <person name="Gehring I."/>
            <person name="Berger A."/>
            <person name="Dooley C.M."/>
            <person name="Ersan-Urun Z."/>
            <person name="Eser C."/>
            <person name="Geiger H."/>
            <person name="Geisler M."/>
            <person name="Karotki L."/>
            <person name="Kirn A."/>
            <person name="Konantz J."/>
            <person name="Konantz M."/>
            <person name="Oberlander M."/>
            <person name="Rudolph-Geiger S."/>
            <person name="Teucke M."/>
            <person name="Lanz C."/>
            <person name="Raddatz G."/>
            <person name="Osoegawa K."/>
            <person name="Zhu B."/>
            <person name="Rapp A."/>
            <person name="Widaa S."/>
            <person name="Langford C."/>
            <person name="Yang F."/>
            <person name="Schuster S.C."/>
            <person name="Carter N.P."/>
            <person name="Harrow J."/>
            <person name="Ning Z."/>
            <person name="Herrero J."/>
            <person name="Searle S.M."/>
            <person name="Enright A."/>
            <person name="Geisler R."/>
            <person name="Plasterk R.H."/>
            <person name="Lee C."/>
            <person name="Westerfield M."/>
            <person name="de Jong P.J."/>
            <person name="Zon L.I."/>
            <person name="Postlethwait J.H."/>
            <person name="Nusslein-Volhard C."/>
            <person name="Hubbard T.J."/>
            <person name="Roest Crollius H."/>
            <person name="Rogers J."/>
            <person name="Stemple D.L."/>
        </authorList>
    </citation>
    <scope>NUCLEOTIDE SEQUENCE [LARGE SCALE GENOMIC DNA]</scope>
    <source>
        <strain>Tuebingen</strain>
    </source>
</reference>
<reference key="3">
    <citation type="submission" date="2003-01" db="EMBL/GenBank/DDBJ databases">
        <authorList>
            <consortium name="NIH - Zebrafish Gene Collection (ZGC) project"/>
        </authorList>
    </citation>
    <scope>NUCLEOTIDE SEQUENCE [LARGE SCALE MRNA]</scope>
</reference>
<reference key="4">
    <citation type="journal article" date="2010" name="Biochimie">
        <title>Zebrafish Nanos interacts with and regulates the phosphorylation of Mylz2.</title>
        <authorList>
            <person name="Xu Y."/>
            <person name="Wang H."/>
            <person name="Zhou J."/>
            <person name="Lei Y."/>
            <person name="Zhou Y."/>
            <person name="Yang Q."/>
            <person name="Ye D."/>
            <person name="Li W."/>
            <person name="Deng F."/>
        </authorList>
    </citation>
    <scope>INTERACTION WITH NANOS3</scope>
    <scope>PHOSPHORYLATION AT SER-21</scope>
</reference>
<reference key="5">
    <citation type="journal article" date="2020" name="Am. J. Hum. Genet.">
        <title>Mutations in MYLPF Cause a Novel Segmental Amyoplasia that Manifests as Distal Arthrogryposis.</title>
        <authorList>
            <consortium name="University of Washington Center for Mendelian Genomics"/>
            <person name="Chong J.X."/>
            <person name="Talbot J.C."/>
            <person name="Teets E.M."/>
            <person name="Previs S."/>
            <person name="Martin B.L."/>
            <person name="Shively K.M."/>
            <person name="Marvin C.T."/>
            <person name="Aylsworth A.S."/>
            <person name="Saadeh-Haddad R."/>
            <person name="Schatz U.A."/>
            <person name="Inzana F."/>
            <person name="Ben-Omran T."/>
            <person name="Almusafri F."/>
            <person name="Al-Mulla M."/>
            <person name="Buckingham K.J."/>
            <person name="Harel T."/>
            <person name="Mor-Shaked H."/>
            <person name="Radhakrishnan P."/>
            <person name="Girisha K.M."/>
            <person name="Nayak S.S."/>
            <person name="Shukla A."/>
            <person name="Dieterich K."/>
            <person name="Faure J."/>
            <person name="Rendu J."/>
            <person name="Capri Y."/>
            <person name="Latypova X."/>
            <person name="Nickerson D.A."/>
            <person name="Warshaw D.M."/>
            <person name="Janssen P.M.L."/>
            <person name="Amacher S.L."/>
            <person name="Bamshad M.J."/>
        </authorList>
    </citation>
    <scope>DISRUPTION PHENOTYPE</scope>
    <scope>FUNCTION</scope>
</reference>
<protein>
    <recommendedName>
        <fullName>Myosin regulatory light chain 2, skeletal muscle isoform A</fullName>
    </recommendedName>
    <alternativeName>
        <fullName evidence="6">Fast skeletal myosin light chain 2</fullName>
    </alternativeName>
    <alternativeName>
        <fullName>Myosin light chain 11</fullName>
    </alternativeName>
    <alternativeName>
        <fullName>Myosin regulatory light chain 11</fullName>
    </alternativeName>
</protein>
<sequence length="169" mass="18865">MAPKKAKRRAAGGEGSSNVFSMFEQSQIQEYKEAFTIIDQNRDGIISKDDLRDVLASMGQLNVKNEELEAMIKEASGPINFTVFLTMFGEKLKGADPEDVIVSAFKVLDPEGTGSIKKEFLEELLTTQCDRFTAEEMKNLWAAFPPDVAGNVDYKNICYVITHGEEKEE</sequence>